<organism>
    <name type="scientific">Escherichia coli O9:H4 (strain HS)</name>
    <dbReference type="NCBI Taxonomy" id="331112"/>
    <lineage>
        <taxon>Bacteria</taxon>
        <taxon>Pseudomonadati</taxon>
        <taxon>Pseudomonadota</taxon>
        <taxon>Gammaproteobacteria</taxon>
        <taxon>Enterobacterales</taxon>
        <taxon>Enterobacteriaceae</taxon>
        <taxon>Escherichia</taxon>
    </lineage>
</organism>
<dbReference type="EC" id="7.1.1.-" evidence="1"/>
<dbReference type="EMBL" id="CP000802">
    <property type="protein sequence ID" value="ABV06709.1"/>
    <property type="molecule type" value="Genomic_DNA"/>
</dbReference>
<dbReference type="RefSeq" id="WP_000247878.1">
    <property type="nucleotide sequence ID" value="NC_009800.1"/>
</dbReference>
<dbReference type="SMR" id="A8A2F5"/>
<dbReference type="IntAct" id="A8A2F5">
    <property type="interactions" value="1"/>
</dbReference>
<dbReference type="GeneID" id="93774888"/>
<dbReference type="KEGG" id="ecx:EcHS_A2435"/>
<dbReference type="HOGENOM" id="CLU_015134_3_2_6"/>
<dbReference type="GO" id="GO:0030964">
    <property type="term" value="C:NADH dehydrogenase complex"/>
    <property type="evidence" value="ECO:0007669"/>
    <property type="project" value="InterPro"/>
</dbReference>
<dbReference type="GO" id="GO:0005886">
    <property type="term" value="C:plasma membrane"/>
    <property type="evidence" value="ECO:0007669"/>
    <property type="project" value="UniProtKB-SubCell"/>
</dbReference>
<dbReference type="GO" id="GO:0051287">
    <property type="term" value="F:NAD binding"/>
    <property type="evidence" value="ECO:0007669"/>
    <property type="project" value="InterPro"/>
</dbReference>
<dbReference type="GO" id="GO:0008137">
    <property type="term" value="F:NADH dehydrogenase (ubiquinone) activity"/>
    <property type="evidence" value="ECO:0007669"/>
    <property type="project" value="InterPro"/>
</dbReference>
<dbReference type="GO" id="GO:0050136">
    <property type="term" value="F:NADH:ubiquinone reductase (non-electrogenic) activity"/>
    <property type="evidence" value="ECO:0007669"/>
    <property type="project" value="UniProtKB-UniRule"/>
</dbReference>
<dbReference type="GO" id="GO:0048038">
    <property type="term" value="F:quinone binding"/>
    <property type="evidence" value="ECO:0007669"/>
    <property type="project" value="UniProtKB-KW"/>
</dbReference>
<dbReference type="FunFam" id="1.10.645.10:FF:000001">
    <property type="entry name" value="NADH-quinone oxidoreductase subunit C/D"/>
    <property type="match status" value="1"/>
</dbReference>
<dbReference type="FunFam" id="3.30.460.80:FF:000001">
    <property type="entry name" value="NADH-quinone oxidoreductase subunit C/D"/>
    <property type="match status" value="1"/>
</dbReference>
<dbReference type="Gene3D" id="1.10.645.10">
    <property type="entry name" value="Cytochrome-c3 Hydrogenase, chain B"/>
    <property type="match status" value="1"/>
</dbReference>
<dbReference type="Gene3D" id="3.30.460.80">
    <property type="entry name" value="NADH:ubiquinone oxidoreductase, 30kDa subunit"/>
    <property type="match status" value="1"/>
</dbReference>
<dbReference type="HAMAP" id="MF_01357">
    <property type="entry name" value="NDH1_NuoC"/>
    <property type="match status" value="1"/>
</dbReference>
<dbReference type="HAMAP" id="MF_01359">
    <property type="entry name" value="NDH1_NuoCD_1"/>
    <property type="match status" value="1"/>
</dbReference>
<dbReference type="HAMAP" id="MF_01358">
    <property type="entry name" value="NDH1_NuoD"/>
    <property type="match status" value="1"/>
</dbReference>
<dbReference type="InterPro" id="IPR010218">
    <property type="entry name" value="NADH_DH_suC"/>
</dbReference>
<dbReference type="InterPro" id="IPR023062">
    <property type="entry name" value="NADH_DH_suCD"/>
</dbReference>
<dbReference type="InterPro" id="IPR001135">
    <property type="entry name" value="NADH_Q_OxRdtase_suD"/>
</dbReference>
<dbReference type="InterPro" id="IPR037232">
    <property type="entry name" value="NADH_quin_OxRdtase_su_C/D-like"/>
</dbReference>
<dbReference type="InterPro" id="IPR001268">
    <property type="entry name" value="NADH_UbQ_OxRdtase_30kDa_su"/>
</dbReference>
<dbReference type="InterPro" id="IPR014029">
    <property type="entry name" value="NADH_UbQ_OxRdtase_49kDa_CS"/>
</dbReference>
<dbReference type="InterPro" id="IPR020396">
    <property type="entry name" value="NADH_UbQ_OxRdtase_CS"/>
</dbReference>
<dbReference type="InterPro" id="IPR022885">
    <property type="entry name" value="NDH1_su_D/H"/>
</dbReference>
<dbReference type="InterPro" id="IPR029014">
    <property type="entry name" value="NiFe-Hase_large"/>
</dbReference>
<dbReference type="NCBIfam" id="TIGR01961">
    <property type="entry name" value="NuoC_fam"/>
    <property type="match status" value="1"/>
</dbReference>
<dbReference type="NCBIfam" id="TIGR01962">
    <property type="entry name" value="NuoD"/>
    <property type="match status" value="1"/>
</dbReference>
<dbReference type="NCBIfam" id="NF004739">
    <property type="entry name" value="PRK06075.1"/>
    <property type="match status" value="1"/>
</dbReference>
<dbReference type="NCBIfam" id="NF008728">
    <property type="entry name" value="PRK11742.1"/>
    <property type="match status" value="1"/>
</dbReference>
<dbReference type="PANTHER" id="PTHR11993:SF45">
    <property type="entry name" value="NADH-QUINONE OXIDOREDUCTASE SUBUNIT C_D"/>
    <property type="match status" value="1"/>
</dbReference>
<dbReference type="PANTHER" id="PTHR11993">
    <property type="entry name" value="NADH-UBIQUINONE OXIDOREDUCTASE 49 KDA SUBUNIT"/>
    <property type="match status" value="1"/>
</dbReference>
<dbReference type="Pfam" id="PF00329">
    <property type="entry name" value="Complex1_30kDa"/>
    <property type="match status" value="1"/>
</dbReference>
<dbReference type="Pfam" id="PF00346">
    <property type="entry name" value="Complex1_49kDa"/>
    <property type="match status" value="1"/>
</dbReference>
<dbReference type="SUPFAM" id="SSF56762">
    <property type="entry name" value="HydB/Nqo4-like"/>
    <property type="match status" value="1"/>
</dbReference>
<dbReference type="SUPFAM" id="SSF143243">
    <property type="entry name" value="Nqo5-like"/>
    <property type="match status" value="1"/>
</dbReference>
<dbReference type="PROSITE" id="PS00542">
    <property type="entry name" value="COMPLEX1_30K"/>
    <property type="match status" value="1"/>
</dbReference>
<dbReference type="PROSITE" id="PS00535">
    <property type="entry name" value="COMPLEX1_49K"/>
    <property type="match status" value="1"/>
</dbReference>
<reference key="1">
    <citation type="journal article" date="2008" name="J. Bacteriol.">
        <title>The pangenome structure of Escherichia coli: comparative genomic analysis of E. coli commensal and pathogenic isolates.</title>
        <authorList>
            <person name="Rasko D.A."/>
            <person name="Rosovitz M.J."/>
            <person name="Myers G.S.A."/>
            <person name="Mongodin E.F."/>
            <person name="Fricke W.F."/>
            <person name="Gajer P."/>
            <person name="Crabtree J."/>
            <person name="Sebaihia M."/>
            <person name="Thomson N.R."/>
            <person name="Chaudhuri R."/>
            <person name="Henderson I.R."/>
            <person name="Sperandio V."/>
            <person name="Ravel J."/>
        </authorList>
    </citation>
    <scope>NUCLEOTIDE SEQUENCE [LARGE SCALE GENOMIC DNA]</scope>
    <source>
        <strain>HS</strain>
    </source>
</reference>
<protein>
    <recommendedName>
        <fullName evidence="1">NADH-quinone oxidoreductase subunit C/D</fullName>
        <ecNumber evidence="1">7.1.1.-</ecNumber>
    </recommendedName>
    <alternativeName>
        <fullName evidence="1">NADH dehydrogenase I subunit C/D</fullName>
    </alternativeName>
    <alternativeName>
        <fullName evidence="1">NDH-1 subunit C/D</fullName>
    </alternativeName>
</protein>
<keyword id="KW-0997">Cell inner membrane</keyword>
<keyword id="KW-1003">Cell membrane</keyword>
<keyword id="KW-0472">Membrane</keyword>
<keyword id="KW-0511">Multifunctional enzyme</keyword>
<keyword id="KW-0520">NAD</keyword>
<keyword id="KW-0874">Quinone</keyword>
<keyword id="KW-1278">Translocase</keyword>
<keyword id="KW-0813">Transport</keyword>
<keyword id="KW-0830">Ubiquinone</keyword>
<comment type="function">
    <text evidence="1">NDH-1 shuttles electrons from NADH, via FMN and iron-sulfur (Fe-S) centers, to quinones in the respiratory chain. The immediate electron acceptor for the enzyme in this species is believed to be ubiquinone. Couples the redox reaction to proton translocation (for every two electrons transferred, four hydrogen ions are translocated across the cytoplasmic membrane), and thus conserves the redox energy in a proton gradient.</text>
</comment>
<comment type="catalytic activity">
    <reaction evidence="1">
        <text>a quinone + NADH + 5 H(+)(in) = a quinol + NAD(+) + 4 H(+)(out)</text>
        <dbReference type="Rhea" id="RHEA:57888"/>
        <dbReference type="ChEBI" id="CHEBI:15378"/>
        <dbReference type="ChEBI" id="CHEBI:24646"/>
        <dbReference type="ChEBI" id="CHEBI:57540"/>
        <dbReference type="ChEBI" id="CHEBI:57945"/>
        <dbReference type="ChEBI" id="CHEBI:132124"/>
    </reaction>
</comment>
<comment type="subunit">
    <text evidence="1">NDH-1 is composed of 13 different subunits. Subunits NuoB, CD, E, F, and G constitute the peripheral sector of the complex.</text>
</comment>
<comment type="subcellular location">
    <subcellularLocation>
        <location evidence="1">Cell inner membrane</location>
        <topology evidence="1">Peripheral membrane protein</topology>
        <orientation evidence="1">Cytoplasmic side</orientation>
    </subcellularLocation>
</comment>
<comment type="similarity">
    <text evidence="1">In the N-terminal section; belongs to the complex I 30 kDa subunit family.</text>
</comment>
<comment type="similarity">
    <text evidence="1">In the C-terminal section; belongs to the complex I 49 kDa subunit family.</text>
</comment>
<accession>A8A2F5</accession>
<gene>
    <name evidence="1" type="primary">nuoC</name>
    <name evidence="1" type="synonym">nuoCD</name>
    <name evidence="1" type="synonym">nuoD</name>
    <name type="ordered locus">EcHS_A2435</name>
</gene>
<name>NUOCD_ECOHS</name>
<feature type="chain" id="PRO_0000358641" description="NADH-quinone oxidoreductase subunit C/D">
    <location>
        <begin position="1"/>
        <end position="600"/>
    </location>
</feature>
<feature type="region of interest" description="NADH dehydrogenase I subunit C" evidence="1">
    <location>
        <begin position="1"/>
        <end position="190"/>
    </location>
</feature>
<feature type="region of interest" description="NADH dehydrogenase I subunit D" evidence="1">
    <location>
        <begin position="214"/>
        <end position="600"/>
    </location>
</feature>
<proteinExistence type="inferred from homology"/>
<sequence>MVNNMTDLTAQEPAWQTRDHLDDPVIGELRNRFGPDAFTVQATRTGVPVVWIKREQLLEVGDFLKKLPKPYVMLFDLHGMDERLRTHREGLPAADFSVFYHLISIDRNRDIMLKVALAENDLHVPTFTKLFPNANWYERETWDLFGITFDGHPNLRRIMMPQTWKGHPLRKDYPARATEFSPFELTKAKQDLEMEALTFKPEEWGMKRGTENEDFMFLNLGPNHPSAHGAFRIVLQLDGEEIVDCVPDIGYHHRGAEKMGERQSWHSYIPYTDRIEYLGGCVNEMPYVLAVEKLAGITVPDRVNVIRVMLSELFRINSHLLYISTFIQDVGAMTPVFFAFTDRQKIYDLVEAITGFRMHPAWFRIGGVAHDLPRGWDRLLREFLDWMPKRLASYEKAALQNTILKGRSQGVAAYGAKEALEWGTTGAGLRATGIDFDVRKARPYSGYENFDFEIPVGGGVSDCYTRVMLKVEELRQSLRILEQCLNNMPEGPFKADHPLTTPPPKERTLQHIETLITHFLQVSWGPVMPANESFQMIEATKGINSYYLTSDGSTMSYRTRIRTPSYAHLQQIPAAIRGSLVSDLIVYLGSIDFVMSDVDR</sequence>
<evidence type="ECO:0000255" key="1">
    <source>
        <dbReference type="HAMAP-Rule" id="MF_01359"/>
    </source>
</evidence>